<name>THIO2_CORNE</name>
<protein>
    <recommendedName>
        <fullName>Thioredoxin C-2</fullName>
    </recommendedName>
</protein>
<evidence type="ECO:0000255" key="1">
    <source>
        <dbReference type="PROSITE-ProRule" id="PRU00691"/>
    </source>
</evidence>
<evidence type="ECO:0000305" key="2"/>
<feature type="initiator methionine" description="Removed">
    <location>
        <position position="1"/>
    </location>
</feature>
<feature type="chain" id="PRO_0000120094" description="Thioredoxin C-2">
    <location>
        <begin position="2"/>
        <end position="108"/>
    </location>
</feature>
<feature type="domain" description="Thioredoxin" evidence="1">
    <location>
        <begin position="2"/>
        <end position="108"/>
    </location>
</feature>
<feature type="disulfide bond" description="Redox-active" evidence="1">
    <location>
        <begin position="33"/>
        <end position="36"/>
    </location>
</feature>
<dbReference type="EMBL" id="X14630">
    <property type="protein sequence ID" value="CAA32779.1"/>
    <property type="molecule type" value="Genomic_DNA"/>
</dbReference>
<dbReference type="EMBL" id="J02801">
    <property type="protein sequence ID" value="AAA23305.1"/>
    <property type="status" value="ALT_INIT"/>
    <property type="molecule type" value="Genomic_DNA"/>
</dbReference>
<dbReference type="SMR" id="P07887"/>
<dbReference type="GO" id="GO:0005829">
    <property type="term" value="C:cytosol"/>
    <property type="evidence" value="ECO:0007669"/>
    <property type="project" value="TreeGrafter"/>
</dbReference>
<dbReference type="GO" id="GO:0015035">
    <property type="term" value="F:protein-disulfide reductase activity"/>
    <property type="evidence" value="ECO:0007669"/>
    <property type="project" value="InterPro"/>
</dbReference>
<dbReference type="GO" id="GO:0045454">
    <property type="term" value="P:cell redox homeostasis"/>
    <property type="evidence" value="ECO:0007669"/>
    <property type="project" value="TreeGrafter"/>
</dbReference>
<dbReference type="CDD" id="cd02947">
    <property type="entry name" value="TRX_family"/>
    <property type="match status" value="1"/>
</dbReference>
<dbReference type="FunFam" id="3.40.30.10:FF:000001">
    <property type="entry name" value="Thioredoxin"/>
    <property type="match status" value="1"/>
</dbReference>
<dbReference type="Gene3D" id="3.40.30.10">
    <property type="entry name" value="Glutaredoxin"/>
    <property type="match status" value="1"/>
</dbReference>
<dbReference type="InterPro" id="IPR005746">
    <property type="entry name" value="Thioredoxin"/>
</dbReference>
<dbReference type="InterPro" id="IPR036249">
    <property type="entry name" value="Thioredoxin-like_sf"/>
</dbReference>
<dbReference type="InterPro" id="IPR017937">
    <property type="entry name" value="Thioredoxin_CS"/>
</dbReference>
<dbReference type="InterPro" id="IPR013766">
    <property type="entry name" value="Thioredoxin_domain"/>
</dbReference>
<dbReference type="NCBIfam" id="TIGR01068">
    <property type="entry name" value="thioredoxin"/>
    <property type="match status" value="1"/>
</dbReference>
<dbReference type="PANTHER" id="PTHR45663">
    <property type="entry name" value="GEO12009P1"/>
    <property type="match status" value="1"/>
</dbReference>
<dbReference type="PANTHER" id="PTHR45663:SF11">
    <property type="entry name" value="GEO12009P1"/>
    <property type="match status" value="1"/>
</dbReference>
<dbReference type="Pfam" id="PF00085">
    <property type="entry name" value="Thioredoxin"/>
    <property type="match status" value="1"/>
</dbReference>
<dbReference type="PIRSF" id="PIRSF000077">
    <property type="entry name" value="Thioredoxin"/>
    <property type="match status" value="1"/>
</dbReference>
<dbReference type="PRINTS" id="PR00421">
    <property type="entry name" value="THIOREDOXIN"/>
</dbReference>
<dbReference type="SUPFAM" id="SSF52833">
    <property type="entry name" value="Thioredoxin-like"/>
    <property type="match status" value="1"/>
</dbReference>
<dbReference type="PROSITE" id="PS00194">
    <property type="entry name" value="THIOREDOXIN_1"/>
    <property type="match status" value="1"/>
</dbReference>
<dbReference type="PROSITE" id="PS51352">
    <property type="entry name" value="THIOREDOXIN_2"/>
    <property type="match status" value="1"/>
</dbReference>
<reference key="1">
    <citation type="journal article" date="1987" name="J. Biol. Chem.">
        <title>Cloning, expression, and nucleotide sequence of a gene encoding a second thioredoxin from Corynebacterium nephridii.</title>
        <authorList>
            <person name="Lim C.-J."/>
            <person name="Fuchs J.A."/>
            <person name="McFarlan S.C."/>
            <person name="Hogenkamp H.P.C."/>
        </authorList>
    </citation>
    <scope>NUCLEOTIDE SEQUENCE [GENOMIC DNA]</scope>
</reference>
<reference key="2">
    <citation type="journal article" date="1989" name="Eur. J. Biochem.">
        <title>Purification, characterization and revised amino acid sequence of a second thioredoxin from Corynebacterium nephridii.</title>
        <authorList>
            <person name="McFarlan S.C."/>
            <person name="Hogenkamp H.P.C."/>
            <person name="Eccleston E.D."/>
            <person name="Howard J.B."/>
            <person name="Fuchs J.A."/>
        </authorList>
    </citation>
    <scope>NUCLEOTIDE SEQUENCE [GENOMIC DNA]</scope>
    <scope>PARTIAL PROTEIN SEQUENCE</scope>
</reference>
<keyword id="KW-0903">Direct protein sequencing</keyword>
<keyword id="KW-1015">Disulfide bond</keyword>
<keyword id="KW-0249">Electron transport</keyword>
<keyword id="KW-0676">Redox-active center</keyword>
<keyword id="KW-0813">Transport</keyword>
<comment type="function">
    <text>Participates in various redox reactions through the reversible oxidation of its active center dithiol to a disulfide and catalyzes dithiol-disulfide exchange reactions.</text>
</comment>
<comment type="similarity">
    <text evidence="2">Belongs to the thioredoxin family.</text>
</comment>
<comment type="sequence caution" evidence="2">
    <conflict type="erroneous initiation">
        <sequence resource="EMBL-CDS" id="AAA23305"/>
    </conflict>
</comment>
<organism>
    <name type="scientific">Corynebacterium nephridii</name>
    <dbReference type="NCBI Taxonomy" id="1722"/>
    <lineage>
        <taxon>Bacteria</taxon>
        <taxon>Bacillati</taxon>
        <taxon>Actinomycetota</taxon>
        <taxon>Actinomycetes</taxon>
        <taxon>Mycobacteriales</taxon>
        <taxon>Corynebacteriaceae</taxon>
        <taxon>Corynebacterium</taxon>
    </lineage>
</organism>
<accession>P07887</accession>
<proteinExistence type="evidence at protein level"/>
<sequence>MSATIVNTTDENFQADVLDAETPVLVDFWAGWCAPCKAIAPVLEELSNEYAGKVKIVKVDVTSCEDTAVKYNIRNIPALLMFKDGEVVAQQVGAAPRSKLAAFIDQNI</sequence>